<evidence type="ECO:0000250" key="1"/>
<evidence type="ECO:0000255" key="2">
    <source>
        <dbReference type="PROSITE-ProRule" id="PRU00108"/>
    </source>
</evidence>
<evidence type="ECO:0000256" key="3">
    <source>
        <dbReference type="SAM" id="MobiDB-lite"/>
    </source>
</evidence>
<evidence type="ECO:0000305" key="4"/>
<reference key="1">
    <citation type="journal article" date="1994" name="Proc. Natl. Acad. Sci. U.S.A.">
        <title>Structure of homeobox-leucine zipper genes suggests a model for the evolution of gene families.</title>
        <authorList>
            <person name="Schena M."/>
            <person name="Davis R.W."/>
        </authorList>
    </citation>
    <scope>NUCLEOTIDE SEQUENCE [MRNA]</scope>
    <source>
        <strain>cv. Columbia</strain>
    </source>
</reference>
<reference key="2">
    <citation type="submission" date="2002-04" db="EMBL/GenBank/DDBJ databases">
        <title>Nucleotide sequence of the Arabidopsis HAT9 mRNA, encoding an HD-Zip II protein related to ATHB-2.</title>
        <authorList>
            <person name="Sessa G."/>
            <person name="Carabelli M."/>
            <person name="Ciarbelli A.R."/>
            <person name="Ruzza V."/>
            <person name="Steindler C."/>
            <person name="Ruberti I."/>
        </authorList>
    </citation>
    <scope>NUCLEOTIDE SEQUENCE [MRNA]</scope>
    <source>
        <strain>cv. Columbia</strain>
    </source>
</reference>
<reference key="3">
    <citation type="journal article" date="1999" name="Nature">
        <title>Sequence and analysis of chromosome 2 of the plant Arabidopsis thaliana.</title>
        <authorList>
            <person name="Lin X."/>
            <person name="Kaul S."/>
            <person name="Rounsley S.D."/>
            <person name="Shea T.P."/>
            <person name="Benito M.-I."/>
            <person name="Town C.D."/>
            <person name="Fujii C.Y."/>
            <person name="Mason T.M."/>
            <person name="Bowman C.L."/>
            <person name="Barnstead M.E."/>
            <person name="Feldblyum T.V."/>
            <person name="Buell C.R."/>
            <person name="Ketchum K.A."/>
            <person name="Lee J.J."/>
            <person name="Ronning C.M."/>
            <person name="Koo H.L."/>
            <person name="Moffat K.S."/>
            <person name="Cronin L.A."/>
            <person name="Shen M."/>
            <person name="Pai G."/>
            <person name="Van Aken S."/>
            <person name="Umayam L."/>
            <person name="Tallon L.J."/>
            <person name="Gill J.E."/>
            <person name="Adams M.D."/>
            <person name="Carrera A.J."/>
            <person name="Creasy T.H."/>
            <person name="Goodman H.M."/>
            <person name="Somerville C.R."/>
            <person name="Copenhaver G.P."/>
            <person name="Preuss D."/>
            <person name="Nierman W.C."/>
            <person name="White O."/>
            <person name="Eisen J.A."/>
            <person name="Salzberg S.L."/>
            <person name="Fraser C.M."/>
            <person name="Venter J.C."/>
        </authorList>
    </citation>
    <scope>NUCLEOTIDE SEQUENCE [LARGE SCALE GENOMIC DNA]</scope>
    <source>
        <strain>cv. Columbia</strain>
    </source>
</reference>
<reference key="4">
    <citation type="journal article" date="2017" name="Plant J.">
        <title>Araport11: a complete reannotation of the Arabidopsis thaliana reference genome.</title>
        <authorList>
            <person name="Cheng C.Y."/>
            <person name="Krishnakumar V."/>
            <person name="Chan A.P."/>
            <person name="Thibaud-Nissen F."/>
            <person name="Schobel S."/>
            <person name="Town C.D."/>
        </authorList>
    </citation>
    <scope>GENOME REANNOTATION</scope>
    <source>
        <strain>cv. Columbia</strain>
    </source>
</reference>
<reference key="5">
    <citation type="submission" date="2006-07" db="EMBL/GenBank/DDBJ databases">
        <title>Large-scale analysis of RIKEN Arabidopsis full-length (RAFL) cDNAs.</title>
        <authorList>
            <person name="Totoki Y."/>
            <person name="Seki M."/>
            <person name="Ishida J."/>
            <person name="Nakajima M."/>
            <person name="Enju A."/>
            <person name="Kamiya A."/>
            <person name="Narusaka M."/>
            <person name="Shin-i T."/>
            <person name="Nakagawa M."/>
            <person name="Sakamoto N."/>
            <person name="Oishi K."/>
            <person name="Kohara Y."/>
            <person name="Kobayashi M."/>
            <person name="Toyoda A."/>
            <person name="Sakaki Y."/>
            <person name="Sakurai T."/>
            <person name="Iida K."/>
            <person name="Akiyama K."/>
            <person name="Satou M."/>
            <person name="Toyoda T."/>
            <person name="Konagaya A."/>
            <person name="Carninci P."/>
            <person name="Kawai J."/>
            <person name="Hayashizaki Y."/>
            <person name="Shinozaki K."/>
        </authorList>
    </citation>
    <scope>NUCLEOTIDE SEQUENCE [LARGE SCALE MRNA]</scope>
    <source>
        <strain>cv. Columbia</strain>
    </source>
</reference>
<reference key="6">
    <citation type="journal article" date="2005" name="Plant Physiol.">
        <title>Homeodomain leucine zipper class I genes in Arabidopsis. Expression patterns and phylogenetic relationships.</title>
        <authorList>
            <person name="Henriksson E."/>
            <person name="Olsson A.S.B."/>
            <person name="Johannesson H."/>
            <person name="Johansson H."/>
            <person name="Hanson J."/>
            <person name="Engstroem P."/>
            <person name="Soederman E."/>
        </authorList>
    </citation>
    <scope>GENE FAMILY</scope>
</reference>
<accession>P46603</accession>
<accession>O82763</accession>
<accession>Q0WP63</accession>
<keyword id="KW-0238">DNA-binding</keyword>
<keyword id="KW-0371">Homeobox</keyword>
<keyword id="KW-0539">Nucleus</keyword>
<keyword id="KW-1185">Reference proteome</keyword>
<keyword id="KW-0804">Transcription</keyword>
<keyword id="KW-0805">Transcription regulation</keyword>
<proteinExistence type="evidence at protein level"/>
<protein>
    <recommendedName>
        <fullName>Homeobox-leucine zipper protein HAT9</fullName>
    </recommendedName>
    <alternativeName>
        <fullName>Homeodomain-leucine zipper protein HAT9</fullName>
        <shortName>HD-ZIP protein 9</shortName>
    </alternativeName>
</protein>
<name>HAT9_ARATH</name>
<sequence>MGFDDTCNTGLVLGLGPSPIPNNYNSTIRQSSVYKLEPSLTLCLSGDPSVTVVTGADQLCRQTSSHSGVSSFSSGRVVKRERDGGEESPEEEEMTERVISDYHEDEEGISARKKLRLTKQQSALLEESFKDHSTLNPKQKQVLARQLNLRPRQVEVWFQNRRARTKLKQTEVDCEFLKKCCETLADENIRLQKEIQELKTLKLTQPFYMHMPASTLTKCPSCERIGGGGGGNGGGGGGSGATAVIVDGSTAKGAFSISSKPHFFNPFTNPSAAC</sequence>
<organism>
    <name type="scientific">Arabidopsis thaliana</name>
    <name type="common">Mouse-ear cress</name>
    <dbReference type="NCBI Taxonomy" id="3702"/>
    <lineage>
        <taxon>Eukaryota</taxon>
        <taxon>Viridiplantae</taxon>
        <taxon>Streptophyta</taxon>
        <taxon>Embryophyta</taxon>
        <taxon>Tracheophyta</taxon>
        <taxon>Spermatophyta</taxon>
        <taxon>Magnoliopsida</taxon>
        <taxon>eudicotyledons</taxon>
        <taxon>Gunneridae</taxon>
        <taxon>Pentapetalae</taxon>
        <taxon>rosids</taxon>
        <taxon>malvids</taxon>
        <taxon>Brassicales</taxon>
        <taxon>Brassicaceae</taxon>
        <taxon>Camelineae</taxon>
        <taxon>Arabidopsis</taxon>
    </lineage>
</organism>
<gene>
    <name type="primary">HAT9</name>
    <name type="ordered locus">At2g22800</name>
    <name type="ORF">T20K9.1</name>
    <name type="ORF">T30L20.6</name>
</gene>
<feature type="chain" id="PRO_0000048904" description="Homeobox-leucine zipper protein HAT9">
    <location>
        <begin position="1"/>
        <end position="274"/>
    </location>
</feature>
<feature type="DNA-binding region" description="Homeobox" evidence="2">
    <location>
        <begin position="110"/>
        <end position="169"/>
    </location>
</feature>
<feature type="region of interest" description="Disordered" evidence="3">
    <location>
        <begin position="64"/>
        <end position="96"/>
    </location>
</feature>
<feature type="region of interest" description="Leucine-zipper">
    <location>
        <begin position="177"/>
        <end position="198"/>
    </location>
</feature>
<feature type="compositionally biased region" description="Low complexity" evidence="3">
    <location>
        <begin position="64"/>
        <end position="74"/>
    </location>
</feature>
<feature type="sequence conflict" description="In Ref. 1; AAA56907/AAA56908 and 2; CAD29652." evidence="4" ref="1 2">
    <original>P</original>
    <variation>S</variation>
    <location>
        <position position="21"/>
    </location>
</feature>
<feature type="sequence conflict" description="In Ref. 1; AAA56908." evidence="4" ref="1">
    <original>E</original>
    <variation>V</variation>
    <location>
        <position position="90"/>
    </location>
</feature>
<comment type="function">
    <text evidence="1">Probable transcription factor.</text>
</comment>
<comment type="interaction">
    <interactant intactId="EBI-15192157">
        <id>P46603</id>
    </interactant>
    <interactant intactId="EBI-3133795">
        <id>Q8GXM7</id>
        <label>ATHB-X</label>
    </interactant>
    <organismsDiffer>false</organismsDiffer>
    <experiments>4</experiments>
</comment>
<comment type="interaction">
    <interactant intactId="EBI-15192157">
        <id>P46603</id>
    </interactant>
    <interactant intactId="EBI-15195911">
        <id>P46600</id>
        <label>HAT1</label>
    </interactant>
    <organismsDiffer>false</organismsDiffer>
    <experiments>4</experiments>
</comment>
<comment type="interaction">
    <interactant intactId="EBI-15192157">
        <id>P46603</id>
    </interactant>
    <interactant intactId="EBI-15192159">
        <id>Q8LAV5</id>
        <label>REM20</label>
    </interactant>
    <organismsDiffer>false</organismsDiffer>
    <experiments>3</experiments>
</comment>
<comment type="subcellular location">
    <subcellularLocation>
        <location evidence="4">Nucleus</location>
    </subcellularLocation>
</comment>
<comment type="similarity">
    <text evidence="4">Belongs to the HD-ZIP homeobox family. Class II subfamily.</text>
</comment>
<dbReference type="EMBL" id="U09341">
    <property type="protein sequence ID" value="AAA56907.1"/>
    <property type="molecule type" value="mRNA"/>
</dbReference>
<dbReference type="EMBL" id="U09342">
    <property type="protein sequence ID" value="AAA56908.1"/>
    <property type="molecule type" value="mRNA"/>
</dbReference>
<dbReference type="EMBL" id="AJ441253">
    <property type="protein sequence ID" value="CAD29652.1"/>
    <property type="molecule type" value="mRNA"/>
</dbReference>
<dbReference type="EMBL" id="AC004786">
    <property type="protein sequence ID" value="AAC32427.1"/>
    <property type="molecule type" value="Genomic_DNA"/>
</dbReference>
<dbReference type="EMBL" id="AC005617">
    <property type="protein sequence ID" value="AAM15064.1"/>
    <property type="molecule type" value="Genomic_DNA"/>
</dbReference>
<dbReference type="EMBL" id="CP002685">
    <property type="protein sequence ID" value="AEC07356.1"/>
    <property type="molecule type" value="Genomic_DNA"/>
</dbReference>
<dbReference type="EMBL" id="AK229218">
    <property type="protein sequence ID" value="BAF01086.1"/>
    <property type="molecule type" value="mRNA"/>
</dbReference>
<dbReference type="PIR" id="A84617">
    <property type="entry name" value="A84617"/>
</dbReference>
<dbReference type="PIR" id="T52371">
    <property type="entry name" value="T52371"/>
</dbReference>
<dbReference type="PIR" id="T52372">
    <property type="entry name" value="T52372"/>
</dbReference>
<dbReference type="RefSeq" id="NP_179865.1">
    <property type="nucleotide sequence ID" value="NM_127845.4"/>
</dbReference>
<dbReference type="SMR" id="P46603"/>
<dbReference type="BioGRID" id="2164">
    <property type="interactions" value="17"/>
</dbReference>
<dbReference type="FunCoup" id="P46603">
    <property type="interactions" value="46"/>
</dbReference>
<dbReference type="IntAct" id="P46603">
    <property type="interactions" value="16"/>
</dbReference>
<dbReference type="STRING" id="3702.P46603"/>
<dbReference type="PaxDb" id="3702-AT2G22800.1"/>
<dbReference type="ProteomicsDB" id="230285"/>
<dbReference type="EnsemblPlants" id="AT2G22800.1">
    <property type="protein sequence ID" value="AT2G22800.1"/>
    <property type="gene ID" value="AT2G22800"/>
</dbReference>
<dbReference type="GeneID" id="816811"/>
<dbReference type="Gramene" id="AT2G22800.1">
    <property type="protein sequence ID" value="AT2G22800.1"/>
    <property type="gene ID" value="AT2G22800"/>
</dbReference>
<dbReference type="KEGG" id="ath:AT2G22800"/>
<dbReference type="Araport" id="AT2G22800"/>
<dbReference type="TAIR" id="AT2G22800">
    <property type="gene designation" value="HAT9"/>
</dbReference>
<dbReference type="eggNOG" id="KOG0483">
    <property type="taxonomic scope" value="Eukaryota"/>
</dbReference>
<dbReference type="HOGENOM" id="CLU_049516_0_0_1"/>
<dbReference type="InParanoid" id="P46603"/>
<dbReference type="OMA" id="MHMPAST"/>
<dbReference type="OrthoDB" id="6159439at2759"/>
<dbReference type="PhylomeDB" id="P46603"/>
<dbReference type="PRO" id="PR:P46603"/>
<dbReference type="Proteomes" id="UP000006548">
    <property type="component" value="Chromosome 2"/>
</dbReference>
<dbReference type="ExpressionAtlas" id="P46603">
    <property type="expression patterns" value="baseline and differential"/>
</dbReference>
<dbReference type="GO" id="GO:0005634">
    <property type="term" value="C:nucleus"/>
    <property type="evidence" value="ECO:0007669"/>
    <property type="project" value="UniProtKB-SubCell"/>
</dbReference>
<dbReference type="GO" id="GO:0003700">
    <property type="term" value="F:DNA-binding transcription factor activity"/>
    <property type="evidence" value="ECO:0000250"/>
    <property type="project" value="TAIR"/>
</dbReference>
<dbReference type="GO" id="GO:0000981">
    <property type="term" value="F:DNA-binding transcription factor activity, RNA polymerase II-specific"/>
    <property type="evidence" value="ECO:0007669"/>
    <property type="project" value="InterPro"/>
</dbReference>
<dbReference type="GO" id="GO:0043565">
    <property type="term" value="F:sequence-specific DNA binding"/>
    <property type="evidence" value="ECO:0007669"/>
    <property type="project" value="InterPro"/>
</dbReference>
<dbReference type="CDD" id="cd00086">
    <property type="entry name" value="homeodomain"/>
    <property type="match status" value="1"/>
</dbReference>
<dbReference type="FunFam" id="1.10.10.60:FF:000577">
    <property type="entry name" value="Homeobox-leucine zipper protein 18"/>
    <property type="match status" value="1"/>
</dbReference>
<dbReference type="Gene3D" id="1.10.10.60">
    <property type="entry name" value="Homeodomain-like"/>
    <property type="match status" value="1"/>
</dbReference>
<dbReference type="InterPro" id="IPR001356">
    <property type="entry name" value="HD"/>
</dbReference>
<dbReference type="InterPro" id="IPR050762">
    <property type="entry name" value="HD-ZIP_Homeobox_LZ_Class_II"/>
</dbReference>
<dbReference type="InterPro" id="IPR017970">
    <property type="entry name" value="Homeobox_CS"/>
</dbReference>
<dbReference type="InterPro" id="IPR009057">
    <property type="entry name" value="Homeodomain-like_sf"/>
</dbReference>
<dbReference type="InterPro" id="IPR003106">
    <property type="entry name" value="Leu_zip_homeo"/>
</dbReference>
<dbReference type="PANTHER" id="PTHR45714">
    <property type="entry name" value="HOMEOBOX-LEUCINE ZIPPER PROTEIN HAT14"/>
    <property type="match status" value="1"/>
</dbReference>
<dbReference type="PANTHER" id="PTHR45714:SF34">
    <property type="entry name" value="HOMEOBOX-LEUCINE ZIPPER PROTEIN HAT9"/>
    <property type="match status" value="1"/>
</dbReference>
<dbReference type="Pfam" id="PF02183">
    <property type="entry name" value="HALZ"/>
    <property type="match status" value="1"/>
</dbReference>
<dbReference type="Pfam" id="PF00046">
    <property type="entry name" value="Homeodomain"/>
    <property type="match status" value="1"/>
</dbReference>
<dbReference type="SMART" id="SM00340">
    <property type="entry name" value="HALZ"/>
    <property type="match status" value="1"/>
</dbReference>
<dbReference type="SMART" id="SM00389">
    <property type="entry name" value="HOX"/>
    <property type="match status" value="1"/>
</dbReference>
<dbReference type="SUPFAM" id="SSF46689">
    <property type="entry name" value="Homeodomain-like"/>
    <property type="match status" value="1"/>
</dbReference>
<dbReference type="PROSITE" id="PS00027">
    <property type="entry name" value="HOMEOBOX_1"/>
    <property type="match status" value="1"/>
</dbReference>
<dbReference type="PROSITE" id="PS50071">
    <property type="entry name" value="HOMEOBOX_2"/>
    <property type="match status" value="1"/>
</dbReference>